<evidence type="ECO:0000255" key="1">
    <source>
        <dbReference type="PROSITE-ProRule" id="PRU00044"/>
    </source>
</evidence>
<evidence type="ECO:0000269" key="2">
    <source>
    </source>
</evidence>
<evidence type="ECO:0000269" key="3">
    <source>
    </source>
</evidence>
<evidence type="ECO:0000305" key="4"/>
<dbReference type="EMBL" id="AY040204">
    <property type="protein sequence ID" value="AAK72463.1"/>
    <property type="molecule type" value="mRNA"/>
</dbReference>
<dbReference type="EMBL" id="BC021731">
    <property type="protein sequence ID" value="AAH21731.1"/>
    <property type="molecule type" value="mRNA"/>
</dbReference>
<dbReference type="CCDS" id="CCDS3826.1"/>
<dbReference type="RefSeq" id="NP_653245.2">
    <property type="nucleotide sequence ID" value="NM_144644.3"/>
</dbReference>
<dbReference type="SMR" id="Q8NEY3"/>
<dbReference type="BioGRID" id="126337">
    <property type="interactions" value="6"/>
</dbReference>
<dbReference type="FunCoup" id="Q8NEY3">
    <property type="interactions" value="10"/>
</dbReference>
<dbReference type="IntAct" id="Q8NEY3">
    <property type="interactions" value="4"/>
</dbReference>
<dbReference type="MINT" id="Q8NEY3"/>
<dbReference type="STRING" id="9606.ENSP00000280191"/>
<dbReference type="GlyGen" id="Q8NEY3">
    <property type="glycosylation" value="1 site"/>
</dbReference>
<dbReference type="iPTMnet" id="Q8NEY3"/>
<dbReference type="PhosphoSitePlus" id="Q8NEY3"/>
<dbReference type="BioMuta" id="SPATA4"/>
<dbReference type="DMDM" id="48474486"/>
<dbReference type="MassIVE" id="Q8NEY3"/>
<dbReference type="PaxDb" id="9606-ENSP00000280191"/>
<dbReference type="PeptideAtlas" id="Q8NEY3"/>
<dbReference type="ProteomicsDB" id="73237"/>
<dbReference type="Antibodypedia" id="17256">
    <property type="antibodies" value="142 antibodies from 26 providers"/>
</dbReference>
<dbReference type="DNASU" id="132851"/>
<dbReference type="Ensembl" id="ENST00000280191.7">
    <property type="protein sequence ID" value="ENSP00000280191.2"/>
    <property type="gene ID" value="ENSG00000150628.7"/>
</dbReference>
<dbReference type="GeneID" id="132851"/>
<dbReference type="KEGG" id="hsa:132851"/>
<dbReference type="MANE-Select" id="ENST00000280191.7">
    <property type="protein sequence ID" value="ENSP00000280191.2"/>
    <property type="RefSeq nucleotide sequence ID" value="NM_144644.4"/>
    <property type="RefSeq protein sequence ID" value="NP_653245.2"/>
</dbReference>
<dbReference type="UCSC" id="uc003iuo.2">
    <property type="organism name" value="human"/>
</dbReference>
<dbReference type="AGR" id="HGNC:17333"/>
<dbReference type="CTD" id="132851"/>
<dbReference type="DisGeNET" id="132851"/>
<dbReference type="GeneCards" id="SPATA4"/>
<dbReference type="HGNC" id="HGNC:17333">
    <property type="gene designation" value="SPATA4"/>
</dbReference>
<dbReference type="HPA" id="ENSG00000150628">
    <property type="expression patterns" value="Tissue enriched (testis)"/>
</dbReference>
<dbReference type="MIM" id="609879">
    <property type="type" value="gene"/>
</dbReference>
<dbReference type="neXtProt" id="NX_Q8NEY3"/>
<dbReference type="OpenTargets" id="ENSG00000150628"/>
<dbReference type="PharmGKB" id="PA38232"/>
<dbReference type="VEuPathDB" id="HostDB:ENSG00000150628"/>
<dbReference type="eggNOG" id="ENOG502QU8V">
    <property type="taxonomic scope" value="Eukaryota"/>
</dbReference>
<dbReference type="GeneTree" id="ENSGT00910000144159"/>
<dbReference type="HOGENOM" id="CLU_077979_1_0_1"/>
<dbReference type="InParanoid" id="Q8NEY3"/>
<dbReference type="OMA" id="CIYYPWD"/>
<dbReference type="OrthoDB" id="62528at2759"/>
<dbReference type="PAN-GO" id="Q8NEY3">
    <property type="GO annotations" value="3 GO annotations based on evolutionary models"/>
</dbReference>
<dbReference type="PhylomeDB" id="Q8NEY3"/>
<dbReference type="TreeFam" id="TF323506"/>
<dbReference type="PathwayCommons" id="Q8NEY3"/>
<dbReference type="SignaLink" id="Q8NEY3"/>
<dbReference type="BioGRID-ORCS" id="132851">
    <property type="hits" value="15 hits in 1139 CRISPR screens"/>
</dbReference>
<dbReference type="ChiTaRS" id="SPATA4">
    <property type="organism name" value="human"/>
</dbReference>
<dbReference type="GenomeRNAi" id="132851"/>
<dbReference type="Pharos" id="Q8NEY3">
    <property type="development level" value="Tbio"/>
</dbReference>
<dbReference type="PRO" id="PR:Q8NEY3"/>
<dbReference type="Proteomes" id="UP000005640">
    <property type="component" value="Chromosome 4"/>
</dbReference>
<dbReference type="RNAct" id="Q8NEY3">
    <property type="molecule type" value="protein"/>
</dbReference>
<dbReference type="Bgee" id="ENSG00000150628">
    <property type="expression patterns" value="Expressed in sperm and 111 other cell types or tissues"/>
</dbReference>
<dbReference type="ExpressionAtlas" id="Q8NEY3">
    <property type="expression patterns" value="baseline and differential"/>
</dbReference>
<dbReference type="GO" id="GO:0005930">
    <property type="term" value="C:axoneme"/>
    <property type="evidence" value="ECO:0000318"/>
    <property type="project" value="GO_Central"/>
</dbReference>
<dbReference type="GO" id="GO:0005829">
    <property type="term" value="C:cytosol"/>
    <property type="evidence" value="ECO:0000314"/>
    <property type="project" value="HPA"/>
</dbReference>
<dbReference type="GO" id="GO:0043231">
    <property type="term" value="C:intracellular membrane-bounded organelle"/>
    <property type="evidence" value="ECO:0000314"/>
    <property type="project" value="HPA"/>
</dbReference>
<dbReference type="GO" id="GO:0005654">
    <property type="term" value="C:nucleoplasm"/>
    <property type="evidence" value="ECO:0000314"/>
    <property type="project" value="HPA"/>
</dbReference>
<dbReference type="GO" id="GO:0008017">
    <property type="term" value="F:microtubule binding"/>
    <property type="evidence" value="ECO:0000318"/>
    <property type="project" value="GO_Central"/>
</dbReference>
<dbReference type="GO" id="GO:0051493">
    <property type="term" value="P:regulation of cytoskeleton organization"/>
    <property type="evidence" value="ECO:0000318"/>
    <property type="project" value="GO_Central"/>
</dbReference>
<dbReference type="FunFam" id="1.10.418.10:FF:000061">
    <property type="entry name" value="Spermatogenesis associated 4"/>
    <property type="match status" value="1"/>
</dbReference>
<dbReference type="Gene3D" id="1.10.418.10">
    <property type="entry name" value="Calponin-like domain"/>
    <property type="match status" value="1"/>
</dbReference>
<dbReference type="InterPro" id="IPR010441">
    <property type="entry name" value="CH_2"/>
</dbReference>
<dbReference type="InterPro" id="IPR001715">
    <property type="entry name" value="CH_dom"/>
</dbReference>
<dbReference type="InterPro" id="IPR036872">
    <property type="entry name" value="CH_dom_sf"/>
</dbReference>
<dbReference type="InterPro" id="IPR052111">
    <property type="entry name" value="Spermatogenesis_Ciliary_MAP"/>
</dbReference>
<dbReference type="PANTHER" id="PTHR12509">
    <property type="entry name" value="SPERMATOGENESIS-ASSOCIATED 4-RELATED"/>
    <property type="match status" value="1"/>
</dbReference>
<dbReference type="PANTHER" id="PTHR12509:SF8">
    <property type="entry name" value="SPERMATOGENESIS-ASSOCIATED PROTEIN 4"/>
    <property type="match status" value="1"/>
</dbReference>
<dbReference type="Pfam" id="PF06294">
    <property type="entry name" value="CH_2"/>
    <property type="match status" value="1"/>
</dbReference>
<dbReference type="PROSITE" id="PS50021">
    <property type="entry name" value="CH"/>
    <property type="match status" value="1"/>
</dbReference>
<accession>Q8NEY3</accession>
<accession>Q8NCS5</accession>
<accession>Q8WW15</accession>
<comment type="function">
    <text evidence="3">May play a role in apoptosis regulation.</text>
</comment>
<comment type="interaction">
    <interactant intactId="EBI-7067221">
        <id>Q8NEY3</id>
    </interactant>
    <interactant intactId="EBI-747107">
        <id>Q8IUQ4</id>
        <label>SIAH1</label>
    </interactant>
    <organismsDiffer>false</organismsDiffer>
    <experiments>3</experiments>
</comment>
<comment type="subcellular location">
    <subcellularLocation>
        <location evidence="2">Nucleus</location>
    </subcellularLocation>
</comment>
<comment type="tissue specificity">
    <text evidence="2">Highly expressed in testis, the expression is observed precisely in seminiferous tubules.</text>
</comment>
<sequence length="305" mass="34751">MAAAGQEKGYLTQTAAALDKSPSLSPQLAAPIRGRPKKCLVYPHAPKSSRLSRSVLRWLQGLDLSFFPRNINRDFSNGFLIAEIFCIYYPWELELSSFENGTSLKVKLDNWAQLEKFLARKKFKLPKELIHGTIHCKAGVPEILIEEVYTLLTHREIKSIQDDFVNFTDYSYQMRLPLVSRSTVSKSIKDNIRLSELLSNPNMLTNELKAEFLILLHMLQRKLGRKLNPEWFDVKPTVGEVTLNHLPAQASGRRYNLKVKRGRVVPVLPNIGSGGSSHREIHVKQAGQHSYYSAMKPIRNMDKKP</sequence>
<proteinExistence type="evidence at protein level"/>
<keyword id="KW-0539">Nucleus</keyword>
<keyword id="KW-1267">Proteomics identification</keyword>
<keyword id="KW-1185">Reference proteome</keyword>
<gene>
    <name type="primary">SPATA4</name>
    <name type="synonym">TSARG2</name>
</gene>
<reference key="1">
    <citation type="journal article" date="2002" name="Sheng Wu Hua Xue Yu Sheng Wu Wu Li Xue Bao">
        <title>Rapid identification of human testis spermatocyte apoptosis-related gene, TSARG2, by nested PCR and draft human genome searching.</title>
        <authorList>
            <person name="Liu S.F."/>
            <person name="Li L.Y."/>
            <person name="Fu J.J."/>
            <person name="Liu G."/>
            <person name="Xing X.W."/>
            <person name="Lu G.X."/>
        </authorList>
    </citation>
    <scope>NUCLEOTIDE SEQUENCE [MRNA]</scope>
    <source>
        <tissue>Testis</tissue>
    </source>
</reference>
<reference key="2">
    <citation type="journal article" date="2004" name="Biochem. Biophys. Res. Commun.">
        <title>Cloning of a full-length cDNA of human testis-specific spermatogenic cell apoptosis inhibitor TSARG2 as a candidate oncogene.</title>
        <authorList>
            <person name="Liu S.F."/>
            <person name="Lu G.X."/>
            <person name="Liu G."/>
            <person name="Xing X.W."/>
            <person name="Li L.Y."/>
            <person name="Wang Z."/>
        </authorList>
    </citation>
    <scope>NUCLEOTIDE SEQUENCE [MRNA]</scope>
    <scope>TISSUE SPECIFICITY</scope>
    <scope>SUBCELLULAR LOCATION</scope>
</reference>
<reference key="3">
    <citation type="journal article" date="2004" name="Genome Res.">
        <title>The status, quality, and expansion of the NIH full-length cDNA project: the Mammalian Gene Collection (MGC).</title>
        <authorList>
            <consortium name="The MGC Project Team"/>
        </authorList>
    </citation>
    <scope>NUCLEOTIDE SEQUENCE [LARGE SCALE MRNA]</scope>
    <source>
        <tissue>Testis</tissue>
    </source>
</reference>
<reference key="4">
    <citation type="journal article" date="2015" name="Biol. Pharm. Bull.">
        <title>SPATA4 Counteracts Etoposide-Induced Apoptosis via Modulating Bcl-2 Family Proteins in HeLa Cells.</title>
        <authorList>
            <person name="Jiang J."/>
            <person name="Li L."/>
            <person name="Xie M."/>
            <person name="Fuji R."/>
            <person name="Liu S."/>
            <person name="Yin X."/>
            <person name="Li G."/>
            <person name="Wang Z."/>
        </authorList>
    </citation>
    <scope>FUNCTION</scope>
</reference>
<feature type="chain" id="PRO_0000072101" description="Spermatogenesis-associated protein 4">
    <location>
        <begin position="1"/>
        <end position="305"/>
    </location>
</feature>
<feature type="domain" description="Calponin-homology (CH)" evidence="1">
    <location>
        <begin position="49"/>
        <end position="155"/>
    </location>
</feature>
<feature type="sequence variant" id="VAR_051369" description="In dbSNP:rs17062589.">
    <original>Y</original>
    <variation>C</variation>
    <location>
        <position position="149"/>
    </location>
</feature>
<feature type="sequence conflict" description="In Ref. 3; AAH21731." evidence="4" ref="3">
    <original>N</original>
    <variation>D</variation>
    <location>
        <position position="70"/>
    </location>
</feature>
<organism>
    <name type="scientific">Homo sapiens</name>
    <name type="common">Human</name>
    <dbReference type="NCBI Taxonomy" id="9606"/>
    <lineage>
        <taxon>Eukaryota</taxon>
        <taxon>Metazoa</taxon>
        <taxon>Chordata</taxon>
        <taxon>Craniata</taxon>
        <taxon>Vertebrata</taxon>
        <taxon>Euteleostomi</taxon>
        <taxon>Mammalia</taxon>
        <taxon>Eutheria</taxon>
        <taxon>Euarchontoglires</taxon>
        <taxon>Primates</taxon>
        <taxon>Haplorrhini</taxon>
        <taxon>Catarrhini</taxon>
        <taxon>Hominidae</taxon>
        <taxon>Homo</taxon>
    </lineage>
</organism>
<name>SPAT4_HUMAN</name>
<protein>
    <recommendedName>
        <fullName>Spermatogenesis-associated protein 4</fullName>
    </recommendedName>
    <alternativeName>
        <fullName>Testis and spermatogenesis cell-related protein 2</fullName>
    </alternativeName>
    <alternativeName>
        <fullName>Testis spermatocyte apoptosis-related gene 2 protein</fullName>
    </alternativeName>
</protein>